<organism>
    <name type="scientific">Nitrosomonas europaea (strain ATCC 19718 / CIP 103999 / KCTC 2705 / NBRC 14298)</name>
    <dbReference type="NCBI Taxonomy" id="228410"/>
    <lineage>
        <taxon>Bacteria</taxon>
        <taxon>Pseudomonadati</taxon>
        <taxon>Pseudomonadota</taxon>
        <taxon>Betaproteobacteria</taxon>
        <taxon>Nitrosomonadales</taxon>
        <taxon>Nitrosomonadaceae</taxon>
        <taxon>Nitrosomonas</taxon>
    </lineage>
</organism>
<proteinExistence type="inferred from homology"/>
<feature type="chain" id="PRO_0000199056" description="Replication restart protein PriB">
    <location>
        <begin position="1"/>
        <end position="108"/>
    </location>
</feature>
<feature type="domain" description="SSB" evidence="1">
    <location>
        <begin position="11"/>
        <end position="108"/>
    </location>
</feature>
<dbReference type="EMBL" id="AL954747">
    <property type="protein sequence ID" value="CAD84108.1"/>
    <property type="molecule type" value="Genomic_DNA"/>
</dbReference>
<dbReference type="RefSeq" id="WP_011110842.1">
    <property type="nucleotide sequence ID" value="NC_004757.1"/>
</dbReference>
<dbReference type="SMR" id="Q82XQ7"/>
<dbReference type="STRING" id="228410.NE0197"/>
<dbReference type="GeneID" id="87103404"/>
<dbReference type="KEGG" id="neu:NE0197"/>
<dbReference type="eggNOG" id="COG2965">
    <property type="taxonomic scope" value="Bacteria"/>
</dbReference>
<dbReference type="HOGENOM" id="CLU_166075_1_2_4"/>
<dbReference type="OrthoDB" id="9180733at2"/>
<dbReference type="Proteomes" id="UP000001416">
    <property type="component" value="Chromosome"/>
</dbReference>
<dbReference type="GO" id="GO:1990077">
    <property type="term" value="C:primosome complex"/>
    <property type="evidence" value="ECO:0007669"/>
    <property type="project" value="UniProtKB-KW"/>
</dbReference>
<dbReference type="GO" id="GO:0003697">
    <property type="term" value="F:single-stranded DNA binding"/>
    <property type="evidence" value="ECO:0007669"/>
    <property type="project" value="UniProtKB-UniRule"/>
</dbReference>
<dbReference type="GO" id="GO:0006269">
    <property type="term" value="P:DNA replication, synthesis of primer"/>
    <property type="evidence" value="ECO:0007669"/>
    <property type="project" value="UniProtKB-KW"/>
</dbReference>
<dbReference type="Gene3D" id="2.40.50.140">
    <property type="entry name" value="Nucleic acid-binding proteins"/>
    <property type="match status" value="1"/>
</dbReference>
<dbReference type="HAMAP" id="MF_00720">
    <property type="entry name" value="PriB"/>
    <property type="match status" value="1"/>
</dbReference>
<dbReference type="InterPro" id="IPR012340">
    <property type="entry name" value="NA-bd_OB-fold"/>
</dbReference>
<dbReference type="InterPro" id="IPR000424">
    <property type="entry name" value="Primosome_PriB/ssb"/>
</dbReference>
<dbReference type="InterPro" id="IPR023646">
    <property type="entry name" value="Prisomal_replication_PriB"/>
</dbReference>
<dbReference type="NCBIfam" id="TIGR04418">
    <property type="entry name" value="PriB_gamma"/>
    <property type="match status" value="1"/>
</dbReference>
<dbReference type="Pfam" id="PF22657">
    <property type="entry name" value="SSB_1"/>
    <property type="match status" value="1"/>
</dbReference>
<dbReference type="PIRSF" id="PIRSF003135">
    <property type="entry name" value="Primosomal_n"/>
    <property type="match status" value="1"/>
</dbReference>
<dbReference type="SUPFAM" id="SSF50249">
    <property type="entry name" value="Nucleic acid-binding proteins"/>
    <property type="match status" value="1"/>
</dbReference>
<dbReference type="PROSITE" id="PS50935">
    <property type="entry name" value="SSB"/>
    <property type="match status" value="1"/>
</dbReference>
<protein>
    <recommendedName>
        <fullName evidence="1">Replication restart protein PriB</fullName>
    </recommendedName>
</protein>
<reference key="1">
    <citation type="journal article" date="2003" name="J. Bacteriol.">
        <title>Complete genome sequence of the ammonia-oxidizing bacterium and obligate chemolithoautotroph Nitrosomonas europaea.</title>
        <authorList>
            <person name="Chain P."/>
            <person name="Lamerdin J.E."/>
            <person name="Larimer F.W."/>
            <person name="Regala W."/>
            <person name="Lao V."/>
            <person name="Land M.L."/>
            <person name="Hauser L."/>
            <person name="Hooper A.B."/>
            <person name="Klotz M.G."/>
            <person name="Norton J."/>
            <person name="Sayavedra-Soto L.A."/>
            <person name="Arciero D.M."/>
            <person name="Hommes N.G."/>
            <person name="Whittaker M.M."/>
            <person name="Arp D.J."/>
        </authorList>
    </citation>
    <scope>NUCLEOTIDE SEQUENCE [LARGE SCALE GENOMIC DNA]</scope>
    <source>
        <strain>ATCC 19718 / CIP 103999 / KCTC 2705 / NBRC 14298</strain>
    </source>
</reference>
<accession>Q82XQ7</accession>
<comment type="function">
    <text evidence="1">Involved in the restart of stalled replication forks, which reloads the replicative helicase on sites other than the origin of replication; the PriA-PriB pathway is the major replication restart pathway. During primosome assembly it facilitates complex formation between PriA and DnaT on DNA; stabilizes PriA on DNA. Stimulates the DNA unwinding activity of PriA helicase.</text>
</comment>
<comment type="subunit">
    <text evidence="1">Homodimer. Interacts with PriA and DnaT. Component of the replication restart primosome. Primosome assembly occurs via a 'hand-off' mechanism. PriA binds to replication forks, subsequently PriB then DnaT bind; DnaT then displaces ssDNA to generate the helicase loading substrate.</text>
</comment>
<comment type="similarity">
    <text evidence="1">Belongs to the PriB family.</text>
</comment>
<name>PRIB_NITEU</name>
<sequence>MIPNPDPESSINRNQVIISGTITDLASPRYTPAGLMIAEFKLSHCSNQQEAGIQRRIEFEFEAIAIAETAEKIIRIGSGSNVEITGFIAKKNRLSNQLVLHVRDTRII</sequence>
<keyword id="KW-0235">DNA replication</keyword>
<keyword id="KW-0238">DNA-binding</keyword>
<keyword id="KW-0639">Primosome</keyword>
<keyword id="KW-1185">Reference proteome</keyword>
<gene>
    <name evidence="1" type="primary">priB</name>
    <name type="ordered locus">NE0197</name>
</gene>
<evidence type="ECO:0000255" key="1">
    <source>
        <dbReference type="HAMAP-Rule" id="MF_00720"/>
    </source>
</evidence>